<name>VIE1_HCMVM</name>
<organism>
    <name type="scientific">Human cytomegalovirus (strain Merlin)</name>
    <name type="common">HHV-5</name>
    <name type="synonym">Human herpesvirus 5</name>
    <dbReference type="NCBI Taxonomy" id="295027"/>
    <lineage>
        <taxon>Viruses</taxon>
        <taxon>Duplodnaviria</taxon>
        <taxon>Heunggongvirae</taxon>
        <taxon>Peploviricota</taxon>
        <taxon>Herviviricetes</taxon>
        <taxon>Herpesvirales</taxon>
        <taxon>Orthoherpesviridae</taxon>
        <taxon>Betaherpesvirinae</taxon>
        <taxon>Cytomegalovirus</taxon>
        <taxon>Cytomegalovirus humanbeta5</taxon>
        <taxon>Human cytomegalovirus</taxon>
    </lineage>
</organism>
<sequence length="491" mass="55103">MESSAKRKMDPDNPDEGPSSKVPRPETPVTKATTFLQTMLRKEVNSQLSLGDPLFPELAEESLKTFEQVTEDCNENPEKDVLTELVKQIKVRVDMVRHRIKEHMLKKYTQTEEKFTGAFNMMGGCLQNALDILDKVHEPFEDMKCIGLTMQSMYENYIVPEDKREMWMACIKELHDVSKGAANKLGGALQAKARAKKDELRRKMMYMCYRNIEFFTKNSAFPKTTNGCSQAMAALQNLPQCSPDEIMSYAQKIFKILDEERDKVLTHIDHIFMDILTTCVETMCNEYKVTSDACMMTMYGGISLLSEFCRVLCCYVLEETSVMLAKRPLITKPEVISVMKRRIEEICMKVFAQYILGADPLRVCSPSVDDLRAIAEESDEEEAIVAYTLATAGASSSDSLVSPPESPVPATIPLSSVIVAENSDQEESEQSDEEQEEGAQEEREDTVSVKSEPVSEIEEVASEEEEDGAEEPTASGGKSTHPMVTRSKADQ</sequence>
<proteinExistence type="inferred from homology"/>
<protein>
    <recommendedName>
        <fullName>Immediate early protein IE1</fullName>
        <shortName>IE1</shortName>
    </recommendedName>
    <alternativeName>
        <fullName>55 kDa immediate-early protein 1</fullName>
    </alternativeName>
    <alternativeName>
        <fullName evidence="2">IE1p72</fullName>
    </alternativeName>
    <alternativeName>
        <fullName evidence="3">IE72</fullName>
    </alternativeName>
</protein>
<keyword id="KW-0010">Activator</keyword>
<keyword id="KW-0244">Early protein</keyword>
<keyword id="KW-1078">G1/S host cell cycle checkpoint dysregulation by virus</keyword>
<keyword id="KW-1048">Host nucleus</keyword>
<keyword id="KW-0945">Host-virus interaction</keyword>
<keyword id="KW-1090">Inhibition of host innate immune response by virus</keyword>
<keyword id="KW-1114">Inhibition of host interferon signaling pathway by virus</keyword>
<keyword id="KW-0922">Interferon antiviral system evasion</keyword>
<keyword id="KW-1017">Isopeptide bond</keyword>
<keyword id="KW-1121">Modulation of host cell cycle by virus</keyword>
<keyword id="KW-1185">Reference proteome</keyword>
<keyword id="KW-0832">Ubl conjugation</keyword>
<keyword id="KW-0899">Viral immunoevasion</keyword>
<dbReference type="EMBL" id="AY446894">
    <property type="protein sequence ID" value="AAR31666.1"/>
    <property type="molecule type" value="Genomic_DNA"/>
</dbReference>
<dbReference type="RefSeq" id="YP_081562.1">
    <property type="nucleotide sequence ID" value="NC_006273.2"/>
</dbReference>
<dbReference type="SMR" id="F5HCM1"/>
<dbReference type="BioGRID" id="1678066">
    <property type="interactions" value="16"/>
</dbReference>
<dbReference type="GeneID" id="3077513"/>
<dbReference type="KEGG" id="vg:3077513"/>
<dbReference type="Reactome" id="R-HSA-9609690">
    <property type="pathway name" value="HCMV Early Events"/>
</dbReference>
<dbReference type="Proteomes" id="UP000000938">
    <property type="component" value="Segment"/>
</dbReference>
<dbReference type="GO" id="GO:0042025">
    <property type="term" value="C:host cell nucleus"/>
    <property type="evidence" value="ECO:0007669"/>
    <property type="project" value="UniProtKB-SubCell"/>
</dbReference>
<dbReference type="GO" id="GO:0039695">
    <property type="term" value="P:DNA-templated viral transcription"/>
    <property type="evidence" value="ECO:0000250"/>
    <property type="project" value="UniProtKB"/>
</dbReference>
<dbReference type="GO" id="GO:0039645">
    <property type="term" value="P:symbiont-mediated perturbation of host cell cycle G1/S transition checkpoint"/>
    <property type="evidence" value="ECO:0007669"/>
    <property type="project" value="UniProtKB-KW"/>
</dbReference>
<dbReference type="GO" id="GO:0052170">
    <property type="term" value="P:symbiont-mediated suppression of host innate immune response"/>
    <property type="evidence" value="ECO:0007669"/>
    <property type="project" value="UniProtKB-KW"/>
</dbReference>
<dbReference type="GO" id="GO:0039502">
    <property type="term" value="P:symbiont-mediated suppression of host type I interferon-mediated signaling pathway"/>
    <property type="evidence" value="ECO:0007669"/>
    <property type="project" value="UniProtKB-KW"/>
</dbReference>
<dbReference type="InterPro" id="IPR010855">
    <property type="entry name" value="Cytomega_IE1/IE2"/>
</dbReference>
<dbReference type="Pfam" id="PF07340">
    <property type="entry name" value="Herpes_IE1"/>
    <property type="match status" value="1"/>
</dbReference>
<comment type="function">
    <text evidence="2 3">Plays an important role in transactivating viral early genes as well as activating its own promoter, probably by altering the viral chromatin structure (By similarity). Expression of IE1 and IE2 proteins is critical for the establishment of lytic infection and reactivation from viral latency (By similarity). Disrupts PML-associated ND10 nuclear bodies by interfering with host PML and SP100 sumoylation thereby altering the regulation of type I and type II interferon-induced gene expression (By similarity). Promotes efficient viral growth by interacting with and directing host SP100 to degradation, leading to enhanced acetylation level of histones (By similarity). In addition, functions in counteracting the host innate antiviral response (By similarity). Inhibits the type I interferon pathway by directly interacting with and sequestrating host STAT2 (By similarity). Also targets type II interferon pathway by repressing IL6- and STAT3 target genes (By similarity). Repression of STAT3 genes is due to STAT3 nuclear accumulation and disruption of IL6-induced STAT3 phosphorylation by IE1 (By similarity). This repression is followed by phosphorylation and activation of STAT1 (By similarity). Inhibits host ISG transcription by sequestering host ISGF3 in a PML- and STAT2- binding dependent manner (By similarity). Alters host cell cycle progression, probably through its interaction with host E2F1 or RB1 that overcomes the RB1-mediated repression of E2F-responsive promoters (By similarity).</text>
</comment>
<comment type="subunit">
    <text evidence="2 3">Forms homodimers (By similarity). Interacts with human p53/TP53; this interaction inhibits p53/TP53-dependent transactivation activity. Interacts with host STAT1. Interacts with host STAT2; this interaction promotes viral growth and counteracts the antiviral interferon response. May also interact with the host STAT1-STAT2 heterodimer. Interacts with host STAT3; this interaction leads to STAT3 nuclear accumulation and disruption of IL6-induced STAT3 phosphorylation. Interacts with host PML; this interaction probably inhibits PML regulation of type I and type II interferon-induced gene expression. Interacts with host DAXX. Interacts with host SP100. Interacts with host E2F1. Interacts with host RB1. Interacts with host HDAC1; this interaction inhibits histone deacetylation and promotes viral transcription. Interacts with host HDAC2; this interaction inhibits histone deacetylation and promotes viral transcription. Interacts with host HDAC3; this interaction inhibits histone deacetylation and promotes viral transcription. Interacts with host PLSCR1; this interaction inhibits IE1 transactivating activity.</text>
</comment>
<comment type="subcellular location">
    <subcellularLocation>
        <location evidence="2">Host nucleus</location>
    </subcellularLocation>
    <text evidence="2">Colocalizes with host PML-associated nuclear bodies very early post infection.</text>
</comment>
<comment type="domain">
    <text evidence="2">The N-terminal region is required for nuclear targeting. The C-terminal 16-amino acid is termed the chromosome-tethering domain (CTD) and is required for the association of IE1, host PML and host STAT2 with the mitotic chromosomes. Targets host nucleosomes by directly binding to the acidic pocket of core histones.</text>
</comment>
<comment type="PTM">
    <text evidence="2 3">Sumoylated by host PML/nuclear domain 10 (By similarity). Sumoylation abolishes the interaction with host STAT2 and thus the IE1-mediated repression of interferon-stimulated genes (By similarity).</text>
</comment>
<comment type="similarity">
    <text evidence="5">Belongs to the HHV-5 IE1 protein family.</text>
</comment>
<gene>
    <name type="primary">UL123</name>
</gene>
<reference key="1">
    <citation type="journal article" date="2004" name="J. Gen. Virol.">
        <title>Genetic content of wild-type human cytomegalovirus.</title>
        <authorList>
            <person name="Dolan A."/>
            <person name="Cunningham C."/>
            <person name="Hector R.D."/>
            <person name="Hassan-Walker A.F."/>
            <person name="Lee L."/>
            <person name="Addison C."/>
            <person name="Dargan D.J."/>
            <person name="McGeoch D.J."/>
            <person name="Gatherer D."/>
            <person name="Emery V.C."/>
            <person name="Griffiths P.D."/>
            <person name="Sinzger C."/>
            <person name="McSharry B.P."/>
            <person name="Wilkinson G.W.G."/>
            <person name="Davison A.J."/>
        </authorList>
    </citation>
    <scope>NUCLEOTIDE SEQUENCE [LARGE SCALE GENOMIC DNA]</scope>
</reference>
<organismHost>
    <name type="scientific">Homo sapiens</name>
    <name type="common">Human</name>
    <dbReference type="NCBI Taxonomy" id="9606"/>
</organismHost>
<evidence type="ECO:0000250" key="1"/>
<evidence type="ECO:0000250" key="2">
    <source>
        <dbReference type="UniProtKB" id="P03169"/>
    </source>
</evidence>
<evidence type="ECO:0000250" key="3">
    <source>
        <dbReference type="UniProtKB" id="P13202"/>
    </source>
</evidence>
<evidence type="ECO:0000256" key="4">
    <source>
        <dbReference type="SAM" id="MobiDB-lite"/>
    </source>
</evidence>
<evidence type="ECO:0000305" key="5"/>
<accession>F5HCM1</accession>
<feature type="chain" id="PRO_0000416446" description="Immediate early protein IE1">
    <location>
        <begin position="1"/>
        <end position="491"/>
    </location>
</feature>
<feature type="region of interest" description="Disordered" evidence="4">
    <location>
        <begin position="1"/>
        <end position="30"/>
    </location>
</feature>
<feature type="region of interest" description="Nuclear localization signal" evidence="2">
    <location>
        <begin position="1"/>
        <end position="24"/>
    </location>
</feature>
<feature type="region of interest" description="Interaction with host PML, interference with PML sumoylation and disruption of PML-associated nuclear bodies" evidence="2">
    <location>
        <begin position="132"/>
        <end position="346"/>
    </location>
</feature>
<feature type="region of interest" description="Interaction with host STAT2" evidence="2">
    <location>
        <begin position="373"/>
        <end position="445"/>
    </location>
</feature>
<feature type="region of interest" description="Interaction with host STAT3" evidence="2">
    <location>
        <begin position="410"/>
        <end position="445"/>
    </location>
</feature>
<feature type="region of interest" description="Modulation of STAT3/STAT1 signaling" evidence="2">
    <location>
        <begin position="410"/>
        <end position="420"/>
    </location>
</feature>
<feature type="region of interest" description="Disordered" evidence="4">
    <location>
        <begin position="421"/>
        <end position="491"/>
    </location>
</feature>
<feature type="region of interest" description="Acidic" evidence="2">
    <location>
        <begin position="421"/>
        <end position="472"/>
    </location>
</feature>
<feature type="region of interest" description="Interaction with host SUMO1" evidence="2">
    <location>
        <begin position="449"/>
        <end position="452"/>
    </location>
</feature>
<feature type="region of interest" description="Chromosome-tethering domain (CTD), binding to histones" evidence="2">
    <location>
        <begin position="475"/>
        <end position="491"/>
    </location>
</feature>
<feature type="compositionally biased region" description="Basic and acidic residues" evidence="4">
    <location>
        <begin position="1"/>
        <end position="11"/>
    </location>
</feature>
<feature type="compositionally biased region" description="Acidic residues" evidence="4">
    <location>
        <begin position="423"/>
        <end position="444"/>
    </location>
</feature>
<feature type="compositionally biased region" description="Acidic residues" evidence="4">
    <location>
        <begin position="455"/>
        <end position="470"/>
    </location>
</feature>
<feature type="cross-link" description="Glycyl lysine isopeptide (Lys-Gly) (interchain with G-Cter in SUMO)" evidence="1">
    <location>
        <position position="450"/>
    </location>
</feature>